<accession>P9WGQ9</accession>
<accession>L0T4U6</accession>
<accession>P71824</accession>
<accession>Q7D9B1</accession>
<keyword id="KW-0560">Oxidoreductase</keyword>
<keyword id="KW-1185">Reference proteome</keyword>
<name>Y769_MYCTU</name>
<protein>
    <recommendedName>
        <fullName>Uncharacterized oxidoreductase Rv0769</fullName>
        <ecNumber>1.-.-.-</ecNumber>
    </recommendedName>
</protein>
<proteinExistence type="evidence at protein level"/>
<feature type="chain" id="PRO_0000415505" description="Uncharacterized oxidoreductase Rv0769">
    <location>
        <begin position="1"/>
        <end position="248"/>
    </location>
</feature>
<feature type="active site" description="Proton acceptor" evidence="1">
    <location>
        <position position="153"/>
    </location>
</feature>
<feature type="binding site" evidence="1">
    <location>
        <begin position="8"/>
        <end position="32"/>
    </location>
    <ligand>
        <name>NADP(+)</name>
        <dbReference type="ChEBI" id="CHEBI:58349"/>
    </ligand>
</feature>
<feature type="binding site" evidence="1">
    <location>
        <position position="143"/>
    </location>
    <ligand>
        <name>substrate</name>
    </ligand>
</feature>
<organism>
    <name type="scientific">Mycobacterium tuberculosis (strain ATCC 25618 / H37Rv)</name>
    <dbReference type="NCBI Taxonomy" id="83332"/>
    <lineage>
        <taxon>Bacteria</taxon>
        <taxon>Bacillati</taxon>
        <taxon>Actinomycetota</taxon>
        <taxon>Actinomycetes</taxon>
        <taxon>Mycobacteriales</taxon>
        <taxon>Mycobacteriaceae</taxon>
        <taxon>Mycobacterium</taxon>
        <taxon>Mycobacterium tuberculosis complex</taxon>
    </lineage>
</organism>
<dbReference type="EC" id="1.-.-.-"/>
<dbReference type="EMBL" id="AL123456">
    <property type="protein sequence ID" value="CCP43516.1"/>
    <property type="molecule type" value="Genomic_DNA"/>
</dbReference>
<dbReference type="PIR" id="D70707">
    <property type="entry name" value="D70707"/>
</dbReference>
<dbReference type="RefSeq" id="NP_215283.1">
    <property type="nucleotide sequence ID" value="NC_000962.3"/>
</dbReference>
<dbReference type="RefSeq" id="WP_003898579.1">
    <property type="nucleotide sequence ID" value="NZ_NVQJ01000035.1"/>
</dbReference>
<dbReference type="SMR" id="P9WGQ9"/>
<dbReference type="FunCoup" id="P9WGQ9">
    <property type="interactions" value="180"/>
</dbReference>
<dbReference type="STRING" id="83332.Rv0769"/>
<dbReference type="PaxDb" id="83332-Rv0769"/>
<dbReference type="DNASU" id="888837"/>
<dbReference type="GeneID" id="888837"/>
<dbReference type="KEGG" id="mtu:Rv0769"/>
<dbReference type="KEGG" id="mtv:RVBD_0769"/>
<dbReference type="TubercuList" id="Rv0769"/>
<dbReference type="eggNOG" id="COG1028">
    <property type="taxonomic scope" value="Bacteria"/>
</dbReference>
<dbReference type="InParanoid" id="P9WGQ9"/>
<dbReference type="OrthoDB" id="517007at2"/>
<dbReference type="PhylomeDB" id="P9WGQ9"/>
<dbReference type="Proteomes" id="UP000001584">
    <property type="component" value="Chromosome"/>
</dbReference>
<dbReference type="GO" id="GO:0005886">
    <property type="term" value="C:plasma membrane"/>
    <property type="evidence" value="ECO:0007005"/>
    <property type="project" value="MTBBASE"/>
</dbReference>
<dbReference type="GO" id="GO:0016616">
    <property type="term" value="F:oxidoreductase activity, acting on the CH-OH group of donors, NAD or NADP as acceptor"/>
    <property type="evidence" value="ECO:0000318"/>
    <property type="project" value="GO_Central"/>
</dbReference>
<dbReference type="GO" id="GO:0030497">
    <property type="term" value="P:fatty acid elongation"/>
    <property type="evidence" value="ECO:0000318"/>
    <property type="project" value="GO_Central"/>
</dbReference>
<dbReference type="CDD" id="cd05233">
    <property type="entry name" value="SDR_c"/>
    <property type="match status" value="1"/>
</dbReference>
<dbReference type="FunFam" id="3.40.50.720:FF:000817">
    <property type="entry name" value="Short chain dehydrogenase"/>
    <property type="match status" value="1"/>
</dbReference>
<dbReference type="Gene3D" id="3.40.50.720">
    <property type="entry name" value="NAD(P)-binding Rossmann-like Domain"/>
    <property type="match status" value="1"/>
</dbReference>
<dbReference type="InterPro" id="IPR036291">
    <property type="entry name" value="NAD(P)-bd_dom_sf"/>
</dbReference>
<dbReference type="InterPro" id="IPR002347">
    <property type="entry name" value="SDR_fam"/>
</dbReference>
<dbReference type="NCBIfam" id="NF005559">
    <property type="entry name" value="PRK07231.1"/>
    <property type="match status" value="1"/>
</dbReference>
<dbReference type="NCBIfam" id="NF005853">
    <property type="entry name" value="PRK07774.1"/>
    <property type="match status" value="1"/>
</dbReference>
<dbReference type="PANTHER" id="PTHR42760:SF40">
    <property type="entry name" value="3-OXOACYL-[ACYL-CARRIER-PROTEIN] REDUCTASE, CHLOROPLASTIC"/>
    <property type="match status" value="1"/>
</dbReference>
<dbReference type="PANTHER" id="PTHR42760">
    <property type="entry name" value="SHORT-CHAIN DEHYDROGENASES/REDUCTASES FAMILY MEMBER"/>
    <property type="match status" value="1"/>
</dbReference>
<dbReference type="Pfam" id="PF13561">
    <property type="entry name" value="adh_short_C2"/>
    <property type="match status" value="1"/>
</dbReference>
<dbReference type="PRINTS" id="PR00081">
    <property type="entry name" value="GDHRDH"/>
</dbReference>
<dbReference type="PRINTS" id="PR00080">
    <property type="entry name" value="SDRFAMILY"/>
</dbReference>
<dbReference type="SUPFAM" id="SSF51735">
    <property type="entry name" value="NAD(P)-binding Rossmann-fold domains"/>
    <property type="match status" value="1"/>
</dbReference>
<sequence length="248" mass="25966">MFDSKVAIVTGAAQGIGQAYAQALAREGASVVVADINADGAAAVAKQIVADGGTAIHVPVDVSDEDSAKAMVDRAVGAFGGIDYLVNNAAIYGGMKLDLLLTVPLDYYKKFMSVNHDGVLVCTRAVYKHMAKRGGGAIVNQSSTAAWLYSNFYGLAKVGVNGLTQQLARELGGMKIRINAIAPGPIDTEATRTVTPAELVKNMVQTIPLSRMGTPEDLVGMCLFLLSDSASWITGQIFNVDGGQIIRS</sequence>
<comment type="similarity">
    <text evidence="2">Belongs to the short-chain dehydrogenases/reductases (SDR) family.</text>
</comment>
<evidence type="ECO:0000250" key="1"/>
<evidence type="ECO:0000305" key="2"/>
<gene>
    <name type="ordered locus">Rv0769</name>
</gene>
<reference key="1">
    <citation type="journal article" date="1998" name="Nature">
        <title>Deciphering the biology of Mycobacterium tuberculosis from the complete genome sequence.</title>
        <authorList>
            <person name="Cole S.T."/>
            <person name="Brosch R."/>
            <person name="Parkhill J."/>
            <person name="Garnier T."/>
            <person name="Churcher C.M."/>
            <person name="Harris D.E."/>
            <person name="Gordon S.V."/>
            <person name="Eiglmeier K."/>
            <person name="Gas S."/>
            <person name="Barry C.E. III"/>
            <person name="Tekaia F."/>
            <person name="Badcock K."/>
            <person name="Basham D."/>
            <person name="Brown D."/>
            <person name="Chillingworth T."/>
            <person name="Connor R."/>
            <person name="Davies R.M."/>
            <person name="Devlin K."/>
            <person name="Feltwell T."/>
            <person name="Gentles S."/>
            <person name="Hamlin N."/>
            <person name="Holroyd S."/>
            <person name="Hornsby T."/>
            <person name="Jagels K."/>
            <person name="Krogh A."/>
            <person name="McLean J."/>
            <person name="Moule S."/>
            <person name="Murphy L.D."/>
            <person name="Oliver S."/>
            <person name="Osborne J."/>
            <person name="Quail M.A."/>
            <person name="Rajandream M.A."/>
            <person name="Rogers J."/>
            <person name="Rutter S."/>
            <person name="Seeger K."/>
            <person name="Skelton S."/>
            <person name="Squares S."/>
            <person name="Squares R."/>
            <person name="Sulston J.E."/>
            <person name="Taylor K."/>
            <person name="Whitehead S."/>
            <person name="Barrell B.G."/>
        </authorList>
    </citation>
    <scope>NUCLEOTIDE SEQUENCE [LARGE SCALE GENOMIC DNA]</scope>
    <source>
        <strain>ATCC 25618 / H37Rv</strain>
    </source>
</reference>
<reference key="2">
    <citation type="journal article" date="2011" name="Mol. Cell. Proteomics">
        <title>Proteogenomic analysis of Mycobacterium tuberculosis by high resolution mass spectrometry.</title>
        <authorList>
            <person name="Kelkar D.S."/>
            <person name="Kumar D."/>
            <person name="Kumar P."/>
            <person name="Balakrishnan L."/>
            <person name="Muthusamy B."/>
            <person name="Yadav A.K."/>
            <person name="Shrivastava P."/>
            <person name="Marimuthu A."/>
            <person name="Anand S."/>
            <person name="Sundaram H."/>
            <person name="Kingsbury R."/>
            <person name="Harsha H.C."/>
            <person name="Nair B."/>
            <person name="Prasad T.S."/>
            <person name="Chauhan D.S."/>
            <person name="Katoch K."/>
            <person name="Katoch V.M."/>
            <person name="Kumar P."/>
            <person name="Chaerkady R."/>
            <person name="Ramachandran S."/>
            <person name="Dash D."/>
            <person name="Pandey A."/>
        </authorList>
    </citation>
    <scope>IDENTIFICATION BY MASS SPECTROMETRY [LARGE SCALE ANALYSIS]</scope>
    <source>
        <strain>ATCC 25618 / H37Rv</strain>
    </source>
</reference>